<feature type="chain" id="PRO_1000059041" description="Lysine--tRNA ligase">
    <location>
        <begin position="1"/>
        <end position="512"/>
    </location>
</feature>
<feature type="binding site" evidence="1">
    <location>
        <position position="408"/>
    </location>
    <ligand>
        <name>Mg(2+)</name>
        <dbReference type="ChEBI" id="CHEBI:18420"/>
        <label>1</label>
    </ligand>
</feature>
<feature type="binding site" evidence="1">
    <location>
        <position position="415"/>
    </location>
    <ligand>
        <name>Mg(2+)</name>
        <dbReference type="ChEBI" id="CHEBI:18420"/>
        <label>1</label>
    </ligand>
</feature>
<feature type="binding site" evidence="1">
    <location>
        <position position="415"/>
    </location>
    <ligand>
        <name>Mg(2+)</name>
        <dbReference type="ChEBI" id="CHEBI:18420"/>
        <label>2</label>
    </ligand>
</feature>
<gene>
    <name evidence="1" type="primary">lysS</name>
    <name type="ordered locus">P9215_18921</name>
</gene>
<name>SYK_PROM2</name>
<proteinExistence type="inferred from homology"/>
<accession>A8G7C4</accession>
<sequence length="512" mass="58797">MSEIKEARLQKARSLVSKGFASYAQSFKVSNTTSFLLQEFDYLENGQEADFSVSVAGRVLAKRVMGKIAFFTISDQEGQIQLYLDKRIINLNLEKQKLLSFEDIKEIVDIGDWIGVYGTIKKTNKGELSIKVEKWEMLSKSLQPLPDKWHGLTDIEKRYRQRYLDLIVNPHSKNVFKTRAKCISFIRKWLDNRNFLEIETPILQSEAGGAEARPFITHHNTLDIPLYLRIATELHLKRMVVGGFEKVYEMGRIFRNEGISTRHNPEFTSVEIYEAYSDYFDMMNLTEELIKDVVADSCGSLIINYQNKEIDFSKPWLRISMKDIVKKYTGIDFDSFSGDFLAAKQAVKNINVDLSNKVNTMGRLLNEVFEQKVESKLIEPTFVIDYPVEISPLARPHFDNKEIVQRFELFIVGRELANAFSELIDPVDQRERMQLQQSLRDEGDLEAHCIDEDFLNALEIGMPPTGGLGIGIDRLIMLITNSASIRDVIPFPLLKPEITSKKSEKLPLNEVK</sequence>
<organism>
    <name type="scientific">Prochlorococcus marinus (strain MIT 9215)</name>
    <dbReference type="NCBI Taxonomy" id="93060"/>
    <lineage>
        <taxon>Bacteria</taxon>
        <taxon>Bacillati</taxon>
        <taxon>Cyanobacteriota</taxon>
        <taxon>Cyanophyceae</taxon>
        <taxon>Synechococcales</taxon>
        <taxon>Prochlorococcaceae</taxon>
        <taxon>Prochlorococcus</taxon>
    </lineage>
</organism>
<keyword id="KW-0030">Aminoacyl-tRNA synthetase</keyword>
<keyword id="KW-0067">ATP-binding</keyword>
<keyword id="KW-0963">Cytoplasm</keyword>
<keyword id="KW-0436">Ligase</keyword>
<keyword id="KW-0460">Magnesium</keyword>
<keyword id="KW-0479">Metal-binding</keyword>
<keyword id="KW-0547">Nucleotide-binding</keyword>
<keyword id="KW-0648">Protein biosynthesis</keyword>
<comment type="catalytic activity">
    <reaction evidence="1">
        <text>tRNA(Lys) + L-lysine + ATP = L-lysyl-tRNA(Lys) + AMP + diphosphate</text>
        <dbReference type="Rhea" id="RHEA:20792"/>
        <dbReference type="Rhea" id="RHEA-COMP:9696"/>
        <dbReference type="Rhea" id="RHEA-COMP:9697"/>
        <dbReference type="ChEBI" id="CHEBI:30616"/>
        <dbReference type="ChEBI" id="CHEBI:32551"/>
        <dbReference type="ChEBI" id="CHEBI:33019"/>
        <dbReference type="ChEBI" id="CHEBI:78442"/>
        <dbReference type="ChEBI" id="CHEBI:78529"/>
        <dbReference type="ChEBI" id="CHEBI:456215"/>
        <dbReference type="EC" id="6.1.1.6"/>
    </reaction>
</comment>
<comment type="cofactor">
    <cofactor evidence="1">
        <name>Mg(2+)</name>
        <dbReference type="ChEBI" id="CHEBI:18420"/>
    </cofactor>
    <text evidence="1">Binds 3 Mg(2+) ions per subunit.</text>
</comment>
<comment type="subunit">
    <text evidence="1">Homodimer.</text>
</comment>
<comment type="subcellular location">
    <subcellularLocation>
        <location evidence="1">Cytoplasm</location>
    </subcellularLocation>
</comment>
<comment type="similarity">
    <text evidence="1">Belongs to the class-II aminoacyl-tRNA synthetase family.</text>
</comment>
<reference key="1">
    <citation type="journal article" date="2007" name="PLoS Genet.">
        <title>Patterns and implications of gene gain and loss in the evolution of Prochlorococcus.</title>
        <authorList>
            <person name="Kettler G.C."/>
            <person name="Martiny A.C."/>
            <person name="Huang K."/>
            <person name="Zucker J."/>
            <person name="Coleman M.L."/>
            <person name="Rodrigue S."/>
            <person name="Chen F."/>
            <person name="Lapidus A."/>
            <person name="Ferriera S."/>
            <person name="Johnson J."/>
            <person name="Steglich C."/>
            <person name="Church G.M."/>
            <person name="Richardson P."/>
            <person name="Chisholm S.W."/>
        </authorList>
    </citation>
    <scope>NUCLEOTIDE SEQUENCE [LARGE SCALE GENOMIC DNA]</scope>
    <source>
        <strain>MIT 9215</strain>
    </source>
</reference>
<evidence type="ECO:0000255" key="1">
    <source>
        <dbReference type="HAMAP-Rule" id="MF_00252"/>
    </source>
</evidence>
<protein>
    <recommendedName>
        <fullName evidence="1">Lysine--tRNA ligase</fullName>
        <ecNumber evidence="1">6.1.1.6</ecNumber>
    </recommendedName>
    <alternativeName>
        <fullName evidence="1">Lysyl-tRNA synthetase</fullName>
        <shortName evidence="1">LysRS</shortName>
    </alternativeName>
</protein>
<dbReference type="EC" id="6.1.1.6" evidence="1"/>
<dbReference type="EMBL" id="CP000825">
    <property type="protein sequence ID" value="ABV51505.1"/>
    <property type="molecule type" value="Genomic_DNA"/>
</dbReference>
<dbReference type="RefSeq" id="WP_012008500.1">
    <property type="nucleotide sequence ID" value="NC_009840.1"/>
</dbReference>
<dbReference type="SMR" id="A8G7C4"/>
<dbReference type="STRING" id="93060.P9215_18921"/>
<dbReference type="KEGG" id="pmh:P9215_18921"/>
<dbReference type="eggNOG" id="COG1190">
    <property type="taxonomic scope" value="Bacteria"/>
</dbReference>
<dbReference type="HOGENOM" id="CLU_008255_6_0_3"/>
<dbReference type="OrthoDB" id="9802326at2"/>
<dbReference type="Proteomes" id="UP000002014">
    <property type="component" value="Chromosome"/>
</dbReference>
<dbReference type="GO" id="GO:0005829">
    <property type="term" value="C:cytosol"/>
    <property type="evidence" value="ECO:0007669"/>
    <property type="project" value="TreeGrafter"/>
</dbReference>
<dbReference type="GO" id="GO:0005524">
    <property type="term" value="F:ATP binding"/>
    <property type="evidence" value="ECO:0007669"/>
    <property type="project" value="UniProtKB-UniRule"/>
</dbReference>
<dbReference type="GO" id="GO:0004824">
    <property type="term" value="F:lysine-tRNA ligase activity"/>
    <property type="evidence" value="ECO:0007669"/>
    <property type="project" value="UniProtKB-UniRule"/>
</dbReference>
<dbReference type="GO" id="GO:0000287">
    <property type="term" value="F:magnesium ion binding"/>
    <property type="evidence" value="ECO:0007669"/>
    <property type="project" value="UniProtKB-UniRule"/>
</dbReference>
<dbReference type="GO" id="GO:0000049">
    <property type="term" value="F:tRNA binding"/>
    <property type="evidence" value="ECO:0007669"/>
    <property type="project" value="TreeGrafter"/>
</dbReference>
<dbReference type="GO" id="GO:0006430">
    <property type="term" value="P:lysyl-tRNA aminoacylation"/>
    <property type="evidence" value="ECO:0007669"/>
    <property type="project" value="UniProtKB-UniRule"/>
</dbReference>
<dbReference type="CDD" id="cd00775">
    <property type="entry name" value="LysRS_core"/>
    <property type="match status" value="1"/>
</dbReference>
<dbReference type="CDD" id="cd04322">
    <property type="entry name" value="LysRS_N"/>
    <property type="match status" value="1"/>
</dbReference>
<dbReference type="Gene3D" id="3.30.930.10">
    <property type="entry name" value="Bira Bifunctional Protein, Domain 2"/>
    <property type="match status" value="1"/>
</dbReference>
<dbReference type="Gene3D" id="2.40.50.140">
    <property type="entry name" value="Nucleic acid-binding proteins"/>
    <property type="match status" value="1"/>
</dbReference>
<dbReference type="HAMAP" id="MF_00252">
    <property type="entry name" value="Lys_tRNA_synth_class2"/>
    <property type="match status" value="1"/>
</dbReference>
<dbReference type="InterPro" id="IPR004364">
    <property type="entry name" value="Aa-tRNA-synt_II"/>
</dbReference>
<dbReference type="InterPro" id="IPR006195">
    <property type="entry name" value="aa-tRNA-synth_II"/>
</dbReference>
<dbReference type="InterPro" id="IPR045864">
    <property type="entry name" value="aa-tRNA-synth_II/BPL/LPL"/>
</dbReference>
<dbReference type="InterPro" id="IPR002313">
    <property type="entry name" value="Lys-tRNA-ligase_II"/>
</dbReference>
<dbReference type="InterPro" id="IPR034762">
    <property type="entry name" value="Lys-tRNA-ligase_II_bac/euk"/>
</dbReference>
<dbReference type="InterPro" id="IPR044136">
    <property type="entry name" value="Lys-tRNA-ligase_II_N"/>
</dbReference>
<dbReference type="InterPro" id="IPR018149">
    <property type="entry name" value="Lys-tRNA-synth_II_C"/>
</dbReference>
<dbReference type="InterPro" id="IPR012340">
    <property type="entry name" value="NA-bd_OB-fold"/>
</dbReference>
<dbReference type="InterPro" id="IPR004365">
    <property type="entry name" value="NA-bd_OB_tRNA"/>
</dbReference>
<dbReference type="NCBIfam" id="TIGR00499">
    <property type="entry name" value="lysS_bact"/>
    <property type="match status" value="1"/>
</dbReference>
<dbReference type="NCBIfam" id="NF001756">
    <property type="entry name" value="PRK00484.1"/>
    <property type="match status" value="1"/>
</dbReference>
<dbReference type="PANTHER" id="PTHR42918:SF15">
    <property type="entry name" value="LYSINE--TRNA LIGASE, CHLOROPLASTIC_MITOCHONDRIAL"/>
    <property type="match status" value="1"/>
</dbReference>
<dbReference type="PANTHER" id="PTHR42918">
    <property type="entry name" value="LYSYL-TRNA SYNTHETASE"/>
    <property type="match status" value="1"/>
</dbReference>
<dbReference type="Pfam" id="PF00152">
    <property type="entry name" value="tRNA-synt_2"/>
    <property type="match status" value="1"/>
</dbReference>
<dbReference type="Pfam" id="PF01336">
    <property type="entry name" value="tRNA_anti-codon"/>
    <property type="match status" value="1"/>
</dbReference>
<dbReference type="PIRSF" id="PIRSF039101">
    <property type="entry name" value="LysRS2"/>
    <property type="match status" value="1"/>
</dbReference>
<dbReference type="PRINTS" id="PR00982">
    <property type="entry name" value="TRNASYNTHLYS"/>
</dbReference>
<dbReference type="SUPFAM" id="SSF55681">
    <property type="entry name" value="Class II aaRS and biotin synthetases"/>
    <property type="match status" value="1"/>
</dbReference>
<dbReference type="SUPFAM" id="SSF50249">
    <property type="entry name" value="Nucleic acid-binding proteins"/>
    <property type="match status" value="1"/>
</dbReference>
<dbReference type="PROSITE" id="PS50862">
    <property type="entry name" value="AA_TRNA_LIGASE_II"/>
    <property type="match status" value="1"/>
</dbReference>